<accession>P51237</accession>
<feature type="chain" id="PRO_0000096152" description="Putative single-stranded DNA-binding protein ycf41">
    <location>
        <begin position="1"/>
        <end position="111"/>
    </location>
</feature>
<feature type="domain" description="SSB" evidence="1">
    <location>
        <begin position="1"/>
        <end position="98"/>
    </location>
</feature>
<comment type="subcellular location">
    <subcellularLocation>
        <location>Plastid</location>
        <location>Chloroplast</location>
    </subcellularLocation>
</comment>
<geneLocation type="chloroplast"/>
<keyword id="KW-0150">Chloroplast</keyword>
<keyword id="KW-0238">DNA-binding</keyword>
<keyword id="KW-0934">Plastid</keyword>
<evidence type="ECO:0000255" key="1">
    <source>
        <dbReference type="PROSITE-ProRule" id="PRU00252"/>
    </source>
</evidence>
<reference key="1">
    <citation type="journal article" date="1995" name="Plant Mol. Biol. Rep.">
        <title>Complete nucleotide sequence of the Porphyra purpurea chloroplast genome.</title>
        <authorList>
            <person name="Reith M.E."/>
            <person name="Munholland J."/>
        </authorList>
    </citation>
    <scope>NUCLEOTIDE SEQUENCE [LARGE SCALE GENOMIC DNA]</scope>
    <source>
        <strain>Avonport</strain>
    </source>
</reference>
<sequence length="111" mass="13216">MNKCNLLVQILQCKSVKTTSNENQIIKLKARFKKRNKVVAIDLLIWNRQSLEIFKLLKKFDYIIIEGKLHRSETTDIKLMLNQQKDLVFSTSRIFKYKSLLKNKDIDLFIK</sequence>
<proteinExistence type="predicted"/>
<organism>
    <name type="scientific">Porphyra purpurea</name>
    <name type="common">Red seaweed</name>
    <name type="synonym">Ulva purpurea</name>
    <dbReference type="NCBI Taxonomy" id="2787"/>
    <lineage>
        <taxon>Eukaryota</taxon>
        <taxon>Rhodophyta</taxon>
        <taxon>Bangiophyceae</taxon>
        <taxon>Bangiales</taxon>
        <taxon>Bangiaceae</taxon>
        <taxon>Porphyra</taxon>
    </lineage>
</organism>
<gene>
    <name type="primary">ycf41</name>
</gene>
<dbReference type="EMBL" id="U38804">
    <property type="protein sequence ID" value="AAC08123.1"/>
    <property type="molecule type" value="Genomic_DNA"/>
</dbReference>
<dbReference type="PIR" id="S73158">
    <property type="entry name" value="S73158"/>
</dbReference>
<dbReference type="SMR" id="P51237"/>
<dbReference type="GO" id="GO:0009507">
    <property type="term" value="C:chloroplast"/>
    <property type="evidence" value="ECO:0007669"/>
    <property type="project" value="UniProtKB-SubCell"/>
</dbReference>
<dbReference type="GO" id="GO:0003697">
    <property type="term" value="F:single-stranded DNA binding"/>
    <property type="evidence" value="ECO:0007669"/>
    <property type="project" value="InterPro"/>
</dbReference>
<dbReference type="Gene3D" id="2.40.50.140">
    <property type="entry name" value="Nucleic acid-binding proteins"/>
    <property type="match status" value="1"/>
</dbReference>
<dbReference type="InterPro" id="IPR012340">
    <property type="entry name" value="NA-bd_OB-fold"/>
</dbReference>
<dbReference type="InterPro" id="IPR000424">
    <property type="entry name" value="Primosome_PriB/ssb"/>
</dbReference>
<dbReference type="PROSITE" id="PS50935">
    <property type="entry name" value="SSB"/>
    <property type="match status" value="1"/>
</dbReference>
<protein>
    <recommendedName>
        <fullName>Putative single-stranded DNA-binding protein ycf41</fullName>
    </recommendedName>
    <alternativeName>
        <fullName>ORF111</fullName>
    </alternativeName>
</protein>
<name>YCF41_PORPU</name>